<accession>B2TQS2</accession>
<sequence length="304" mass="33367">MNQNKNYRVLFSNLYKDTQMQENAKMSEHINFRVGGPVDILLTPNTKEQIVETINICKENKIPFYVLGNGSNVLVKDSGIRGVVIKLSEFDNIVRDGNTIKAESGALLKDVSAEALKASLTGFEFACGIPGSVGGAVFMNAGAYDGEISFVIKEAEVMSEDGKIITLSKDQLELGYRTSAIMKKNYIVITATFCFESGEKDKIEGRVSELTNKREEKQPLEFPSAGSTFKRPEGHFAGKLIQDAGLKDFTLGGAAVSGKHCGFIINKSNATAKDILDLIEYIQKEVKKQFGVDLYPEVRIIGED</sequence>
<gene>
    <name evidence="1" type="primary">murB</name>
    <name type="ordered locus">CLL_A3343</name>
</gene>
<dbReference type="EC" id="1.3.1.98" evidence="1"/>
<dbReference type="EMBL" id="CP001056">
    <property type="protein sequence ID" value="ACD25049.1"/>
    <property type="molecule type" value="Genomic_DNA"/>
</dbReference>
<dbReference type="SMR" id="B2TQS2"/>
<dbReference type="KEGG" id="cbk:CLL_A3343"/>
<dbReference type="PATRIC" id="fig|935198.13.peg.3309"/>
<dbReference type="HOGENOM" id="CLU_035304_1_1_9"/>
<dbReference type="UniPathway" id="UPA00219"/>
<dbReference type="Proteomes" id="UP000001195">
    <property type="component" value="Chromosome"/>
</dbReference>
<dbReference type="GO" id="GO:0005829">
    <property type="term" value="C:cytosol"/>
    <property type="evidence" value="ECO:0007669"/>
    <property type="project" value="TreeGrafter"/>
</dbReference>
<dbReference type="GO" id="GO:0071949">
    <property type="term" value="F:FAD binding"/>
    <property type="evidence" value="ECO:0007669"/>
    <property type="project" value="InterPro"/>
</dbReference>
<dbReference type="GO" id="GO:0008762">
    <property type="term" value="F:UDP-N-acetylmuramate dehydrogenase activity"/>
    <property type="evidence" value="ECO:0007669"/>
    <property type="project" value="UniProtKB-UniRule"/>
</dbReference>
<dbReference type="GO" id="GO:0051301">
    <property type="term" value="P:cell division"/>
    <property type="evidence" value="ECO:0007669"/>
    <property type="project" value="UniProtKB-KW"/>
</dbReference>
<dbReference type="GO" id="GO:0071555">
    <property type="term" value="P:cell wall organization"/>
    <property type="evidence" value="ECO:0007669"/>
    <property type="project" value="UniProtKB-KW"/>
</dbReference>
<dbReference type="GO" id="GO:0009252">
    <property type="term" value="P:peptidoglycan biosynthetic process"/>
    <property type="evidence" value="ECO:0007669"/>
    <property type="project" value="UniProtKB-UniRule"/>
</dbReference>
<dbReference type="GO" id="GO:0008360">
    <property type="term" value="P:regulation of cell shape"/>
    <property type="evidence" value="ECO:0007669"/>
    <property type="project" value="UniProtKB-KW"/>
</dbReference>
<dbReference type="Gene3D" id="3.30.465.10">
    <property type="match status" value="1"/>
</dbReference>
<dbReference type="Gene3D" id="3.90.78.10">
    <property type="entry name" value="UDP-N-acetylenolpyruvoylglucosamine reductase, C-terminal domain"/>
    <property type="match status" value="1"/>
</dbReference>
<dbReference type="Gene3D" id="3.30.43.10">
    <property type="entry name" value="Uridine Diphospho-n-acetylenolpyruvylglucosamine Reductase, domain 2"/>
    <property type="match status" value="1"/>
</dbReference>
<dbReference type="HAMAP" id="MF_00037">
    <property type="entry name" value="MurB"/>
    <property type="match status" value="1"/>
</dbReference>
<dbReference type="InterPro" id="IPR016166">
    <property type="entry name" value="FAD-bd_PCMH"/>
</dbReference>
<dbReference type="InterPro" id="IPR036318">
    <property type="entry name" value="FAD-bd_PCMH-like_sf"/>
</dbReference>
<dbReference type="InterPro" id="IPR016167">
    <property type="entry name" value="FAD-bd_PCMH_sub1"/>
</dbReference>
<dbReference type="InterPro" id="IPR016169">
    <property type="entry name" value="FAD-bd_PCMH_sub2"/>
</dbReference>
<dbReference type="InterPro" id="IPR003170">
    <property type="entry name" value="MurB"/>
</dbReference>
<dbReference type="InterPro" id="IPR011601">
    <property type="entry name" value="MurB_C"/>
</dbReference>
<dbReference type="InterPro" id="IPR036635">
    <property type="entry name" value="MurB_C_sf"/>
</dbReference>
<dbReference type="InterPro" id="IPR006094">
    <property type="entry name" value="Oxid_FAD_bind_N"/>
</dbReference>
<dbReference type="NCBIfam" id="TIGR00179">
    <property type="entry name" value="murB"/>
    <property type="match status" value="1"/>
</dbReference>
<dbReference type="NCBIfam" id="NF010480">
    <property type="entry name" value="PRK13905.1"/>
    <property type="match status" value="1"/>
</dbReference>
<dbReference type="PANTHER" id="PTHR21071">
    <property type="entry name" value="UDP-N-ACETYLENOLPYRUVOYLGLUCOSAMINE REDUCTASE"/>
    <property type="match status" value="1"/>
</dbReference>
<dbReference type="PANTHER" id="PTHR21071:SF4">
    <property type="entry name" value="UDP-N-ACETYLENOLPYRUVOYLGLUCOSAMINE REDUCTASE"/>
    <property type="match status" value="1"/>
</dbReference>
<dbReference type="Pfam" id="PF01565">
    <property type="entry name" value="FAD_binding_4"/>
    <property type="match status" value="1"/>
</dbReference>
<dbReference type="Pfam" id="PF02873">
    <property type="entry name" value="MurB_C"/>
    <property type="match status" value="1"/>
</dbReference>
<dbReference type="SUPFAM" id="SSF56176">
    <property type="entry name" value="FAD-binding/transporter-associated domain-like"/>
    <property type="match status" value="1"/>
</dbReference>
<dbReference type="SUPFAM" id="SSF56194">
    <property type="entry name" value="Uridine diphospho-N-Acetylenolpyruvylglucosamine reductase, MurB, C-terminal domain"/>
    <property type="match status" value="1"/>
</dbReference>
<dbReference type="PROSITE" id="PS51387">
    <property type="entry name" value="FAD_PCMH"/>
    <property type="match status" value="1"/>
</dbReference>
<organism>
    <name type="scientific">Clostridium botulinum (strain Eklund 17B / Type B)</name>
    <dbReference type="NCBI Taxonomy" id="935198"/>
    <lineage>
        <taxon>Bacteria</taxon>
        <taxon>Bacillati</taxon>
        <taxon>Bacillota</taxon>
        <taxon>Clostridia</taxon>
        <taxon>Eubacteriales</taxon>
        <taxon>Clostridiaceae</taxon>
        <taxon>Clostridium</taxon>
    </lineage>
</organism>
<name>MURB_CLOBB</name>
<evidence type="ECO:0000255" key="1">
    <source>
        <dbReference type="HAMAP-Rule" id="MF_00037"/>
    </source>
</evidence>
<keyword id="KW-0131">Cell cycle</keyword>
<keyword id="KW-0132">Cell division</keyword>
<keyword id="KW-0133">Cell shape</keyword>
<keyword id="KW-0961">Cell wall biogenesis/degradation</keyword>
<keyword id="KW-0963">Cytoplasm</keyword>
<keyword id="KW-0274">FAD</keyword>
<keyword id="KW-0285">Flavoprotein</keyword>
<keyword id="KW-0521">NADP</keyword>
<keyword id="KW-0560">Oxidoreductase</keyword>
<keyword id="KW-0573">Peptidoglycan synthesis</keyword>
<feature type="chain" id="PRO_1000191414" description="UDP-N-acetylenolpyruvoylglucosamine reductase">
    <location>
        <begin position="1"/>
        <end position="304"/>
    </location>
</feature>
<feature type="domain" description="FAD-binding PCMH-type" evidence="1">
    <location>
        <begin position="33"/>
        <end position="198"/>
    </location>
</feature>
<feature type="active site" evidence="1">
    <location>
        <position position="177"/>
    </location>
</feature>
<feature type="active site" description="Proton donor" evidence="1">
    <location>
        <position position="227"/>
    </location>
</feature>
<feature type="active site" evidence="1">
    <location>
        <position position="297"/>
    </location>
</feature>
<proteinExistence type="inferred from homology"/>
<reference key="1">
    <citation type="submission" date="2008-04" db="EMBL/GenBank/DDBJ databases">
        <title>Complete sequence of Clostridium botulinum strain Eklund.</title>
        <authorList>
            <person name="Brinkac L.M."/>
            <person name="Brown J.L."/>
            <person name="Bruce D."/>
            <person name="Detter C."/>
            <person name="Munk C."/>
            <person name="Smith L.A."/>
            <person name="Smith T.J."/>
            <person name="Sutton G."/>
            <person name="Brettin T.S."/>
        </authorList>
    </citation>
    <scope>NUCLEOTIDE SEQUENCE [LARGE SCALE GENOMIC DNA]</scope>
    <source>
        <strain>Eklund 17B / Type B</strain>
    </source>
</reference>
<comment type="function">
    <text evidence="1">Cell wall formation.</text>
</comment>
<comment type="catalytic activity">
    <reaction evidence="1">
        <text>UDP-N-acetyl-alpha-D-muramate + NADP(+) = UDP-N-acetyl-3-O-(1-carboxyvinyl)-alpha-D-glucosamine + NADPH + H(+)</text>
        <dbReference type="Rhea" id="RHEA:12248"/>
        <dbReference type="ChEBI" id="CHEBI:15378"/>
        <dbReference type="ChEBI" id="CHEBI:57783"/>
        <dbReference type="ChEBI" id="CHEBI:58349"/>
        <dbReference type="ChEBI" id="CHEBI:68483"/>
        <dbReference type="ChEBI" id="CHEBI:70757"/>
        <dbReference type="EC" id="1.3.1.98"/>
    </reaction>
</comment>
<comment type="cofactor">
    <cofactor evidence="1">
        <name>FAD</name>
        <dbReference type="ChEBI" id="CHEBI:57692"/>
    </cofactor>
</comment>
<comment type="pathway">
    <text evidence="1">Cell wall biogenesis; peptidoglycan biosynthesis.</text>
</comment>
<comment type="subcellular location">
    <subcellularLocation>
        <location evidence="1">Cytoplasm</location>
    </subcellularLocation>
</comment>
<comment type="similarity">
    <text evidence="1">Belongs to the MurB family.</text>
</comment>
<protein>
    <recommendedName>
        <fullName evidence="1">UDP-N-acetylenolpyruvoylglucosamine reductase</fullName>
        <ecNumber evidence="1">1.3.1.98</ecNumber>
    </recommendedName>
    <alternativeName>
        <fullName evidence="1">UDP-N-acetylmuramate dehydrogenase</fullName>
    </alternativeName>
</protein>